<gene>
    <name evidence="1" type="primary">betA</name>
    <name type="ordered locus">Pmen_0481</name>
</gene>
<evidence type="ECO:0000255" key="1">
    <source>
        <dbReference type="HAMAP-Rule" id="MF_00750"/>
    </source>
</evidence>
<evidence type="ECO:0000256" key="2">
    <source>
        <dbReference type="SAM" id="MobiDB-lite"/>
    </source>
</evidence>
<reference key="1">
    <citation type="submission" date="2007-04" db="EMBL/GenBank/DDBJ databases">
        <title>Complete sequence of Pseudomonas mendocina ymp.</title>
        <authorList>
            <consortium name="US DOE Joint Genome Institute"/>
            <person name="Copeland A."/>
            <person name="Lucas S."/>
            <person name="Lapidus A."/>
            <person name="Barry K."/>
            <person name="Glavina del Rio T."/>
            <person name="Dalin E."/>
            <person name="Tice H."/>
            <person name="Pitluck S."/>
            <person name="Kiss H."/>
            <person name="Brettin T."/>
            <person name="Detter J.C."/>
            <person name="Bruce D."/>
            <person name="Han C."/>
            <person name="Schmutz J."/>
            <person name="Larimer F."/>
            <person name="Land M."/>
            <person name="Hauser L."/>
            <person name="Kyrpides N."/>
            <person name="Mikhailova N."/>
            <person name="Hersman L."/>
            <person name="Dubois J."/>
            <person name="Maurice P."/>
            <person name="Richardson P."/>
        </authorList>
    </citation>
    <scope>NUCLEOTIDE SEQUENCE [LARGE SCALE GENOMIC DNA]</scope>
    <source>
        <strain>ymp</strain>
    </source>
</reference>
<feature type="chain" id="PRO_1000046569" description="Oxygen-dependent choline dehydrogenase">
    <location>
        <begin position="1"/>
        <end position="565"/>
    </location>
</feature>
<feature type="region of interest" description="Disordered" evidence="2">
    <location>
        <begin position="541"/>
        <end position="565"/>
    </location>
</feature>
<feature type="active site" description="Proton acceptor" evidence="1">
    <location>
        <position position="475"/>
    </location>
</feature>
<feature type="binding site" evidence="1">
    <location>
        <begin position="6"/>
        <end position="35"/>
    </location>
    <ligand>
        <name>FAD</name>
        <dbReference type="ChEBI" id="CHEBI:57692"/>
    </ligand>
</feature>
<proteinExistence type="inferred from homology"/>
<accession>A4XPI5</accession>
<sequence length="565" mass="62252">MSHEFDYIIIGAGSAGNVLATRLTEDADVSVLLLEAGGPDYRLDFRTQMPAALAFPLQGRRYNWAYETDPEPHMNNRRMECGRGKGLGGSSLINGMCYIRGNALDFDNWAKAKGLEDWTYHDCLPYFRKAESRDIGPNDYHGGDGPVSVTTPKAGNNPLFHAMVEAGVQAGYPRTDDLNGYQQEGFGPMDRTVTPQGRRASTARGYLDQARERPNLTIVTHATTDRILFDGKRASGVSYLIGNANDATEARARREVLLCAGAIASPQILQRSGVGPAALLRELDIALVHELPGVGQNLQDHLEMYLQYACTQPVSLYPALKLLNQPGIGAQWLFTGNGIGASNQFEAGGFIRTRPEFAWPNIQFHFLPVAINYNGSNAVNEHGFQAHVGSMRSPSRGRIQLKSKDPRQHPSILFNYMSHEQDWQEFRDAIRITREIMAQPALDSYRGREISPGIDCQSDAELDAFIREHAETAFHPSCSCKMGEDDMAVVDGQGRVHGVQGLRVVDASIMPEIITGNLNATTIMMAEKIADRIRDRQPLPRSNAPYFVAGERPVRGQPQRAVSAA</sequence>
<keyword id="KW-0274">FAD</keyword>
<keyword id="KW-0285">Flavoprotein</keyword>
<keyword id="KW-0520">NAD</keyword>
<keyword id="KW-0560">Oxidoreductase</keyword>
<dbReference type="EC" id="1.1.99.1" evidence="1"/>
<dbReference type="EC" id="1.2.1.8" evidence="1"/>
<dbReference type="EMBL" id="CP000680">
    <property type="protein sequence ID" value="ABP83251.1"/>
    <property type="molecule type" value="Genomic_DNA"/>
</dbReference>
<dbReference type="SMR" id="A4XPI5"/>
<dbReference type="STRING" id="399739.Pmen_0481"/>
<dbReference type="KEGG" id="pmy:Pmen_0481"/>
<dbReference type="PATRIC" id="fig|399739.8.peg.490"/>
<dbReference type="eggNOG" id="COG2303">
    <property type="taxonomic scope" value="Bacteria"/>
</dbReference>
<dbReference type="HOGENOM" id="CLU_002865_7_1_6"/>
<dbReference type="OrthoDB" id="9785276at2"/>
<dbReference type="UniPathway" id="UPA00529">
    <property type="reaction ID" value="UER00385"/>
</dbReference>
<dbReference type="GO" id="GO:0016020">
    <property type="term" value="C:membrane"/>
    <property type="evidence" value="ECO:0007669"/>
    <property type="project" value="TreeGrafter"/>
</dbReference>
<dbReference type="GO" id="GO:0008802">
    <property type="term" value="F:betaine-aldehyde dehydrogenase (NAD+) activity"/>
    <property type="evidence" value="ECO:0007669"/>
    <property type="project" value="UniProtKB-EC"/>
</dbReference>
<dbReference type="GO" id="GO:0008812">
    <property type="term" value="F:choline dehydrogenase activity"/>
    <property type="evidence" value="ECO:0007669"/>
    <property type="project" value="UniProtKB-UniRule"/>
</dbReference>
<dbReference type="GO" id="GO:0050660">
    <property type="term" value="F:flavin adenine dinucleotide binding"/>
    <property type="evidence" value="ECO:0007669"/>
    <property type="project" value="InterPro"/>
</dbReference>
<dbReference type="GO" id="GO:0019285">
    <property type="term" value="P:glycine betaine biosynthetic process from choline"/>
    <property type="evidence" value="ECO:0007669"/>
    <property type="project" value="UniProtKB-UniRule"/>
</dbReference>
<dbReference type="Gene3D" id="3.50.50.60">
    <property type="entry name" value="FAD/NAD(P)-binding domain"/>
    <property type="match status" value="1"/>
</dbReference>
<dbReference type="Gene3D" id="3.30.560.10">
    <property type="entry name" value="Glucose Oxidase, domain 3"/>
    <property type="match status" value="1"/>
</dbReference>
<dbReference type="HAMAP" id="MF_00750">
    <property type="entry name" value="Choline_dehydrogen"/>
    <property type="match status" value="1"/>
</dbReference>
<dbReference type="InterPro" id="IPR011533">
    <property type="entry name" value="BetA"/>
</dbReference>
<dbReference type="InterPro" id="IPR036188">
    <property type="entry name" value="FAD/NAD-bd_sf"/>
</dbReference>
<dbReference type="InterPro" id="IPR012132">
    <property type="entry name" value="GMC_OxRdtase"/>
</dbReference>
<dbReference type="InterPro" id="IPR000172">
    <property type="entry name" value="GMC_OxRdtase_N"/>
</dbReference>
<dbReference type="InterPro" id="IPR007867">
    <property type="entry name" value="GMC_OxRtase_C"/>
</dbReference>
<dbReference type="NCBIfam" id="TIGR01810">
    <property type="entry name" value="betA"/>
    <property type="match status" value="1"/>
</dbReference>
<dbReference type="NCBIfam" id="NF002550">
    <property type="entry name" value="PRK02106.1"/>
    <property type="match status" value="1"/>
</dbReference>
<dbReference type="PANTHER" id="PTHR11552:SF147">
    <property type="entry name" value="CHOLINE DEHYDROGENASE, MITOCHONDRIAL"/>
    <property type="match status" value="1"/>
</dbReference>
<dbReference type="PANTHER" id="PTHR11552">
    <property type="entry name" value="GLUCOSE-METHANOL-CHOLINE GMC OXIDOREDUCTASE"/>
    <property type="match status" value="1"/>
</dbReference>
<dbReference type="Pfam" id="PF05199">
    <property type="entry name" value="GMC_oxred_C"/>
    <property type="match status" value="1"/>
</dbReference>
<dbReference type="Pfam" id="PF00732">
    <property type="entry name" value="GMC_oxred_N"/>
    <property type="match status" value="1"/>
</dbReference>
<dbReference type="PIRSF" id="PIRSF000137">
    <property type="entry name" value="Alcohol_oxidase"/>
    <property type="match status" value="1"/>
</dbReference>
<dbReference type="SUPFAM" id="SSF54373">
    <property type="entry name" value="FAD-linked reductases, C-terminal domain"/>
    <property type="match status" value="1"/>
</dbReference>
<dbReference type="SUPFAM" id="SSF51905">
    <property type="entry name" value="FAD/NAD(P)-binding domain"/>
    <property type="match status" value="1"/>
</dbReference>
<dbReference type="PROSITE" id="PS00623">
    <property type="entry name" value="GMC_OXRED_1"/>
    <property type="match status" value="1"/>
</dbReference>
<dbReference type="PROSITE" id="PS00624">
    <property type="entry name" value="GMC_OXRED_2"/>
    <property type="match status" value="1"/>
</dbReference>
<organism>
    <name type="scientific">Ectopseudomonas mendocina (strain ymp)</name>
    <name type="common">Pseudomonas mendocina</name>
    <dbReference type="NCBI Taxonomy" id="399739"/>
    <lineage>
        <taxon>Bacteria</taxon>
        <taxon>Pseudomonadati</taxon>
        <taxon>Pseudomonadota</taxon>
        <taxon>Gammaproteobacteria</taxon>
        <taxon>Pseudomonadales</taxon>
        <taxon>Pseudomonadaceae</taxon>
        <taxon>Ectopseudomonas</taxon>
    </lineage>
</organism>
<name>BETA_ECTM1</name>
<protein>
    <recommendedName>
        <fullName evidence="1">Oxygen-dependent choline dehydrogenase</fullName>
        <shortName evidence="1">CDH</shortName>
        <shortName evidence="1">CHD</shortName>
        <ecNumber evidence="1">1.1.99.1</ecNumber>
    </recommendedName>
    <alternativeName>
        <fullName evidence="1">Betaine aldehyde dehydrogenase</fullName>
        <shortName evidence="1">BADH</shortName>
        <ecNumber evidence="1">1.2.1.8</ecNumber>
    </alternativeName>
</protein>
<comment type="function">
    <text evidence="1">Involved in the biosynthesis of the osmoprotectant glycine betaine. Catalyzes the oxidation of choline to betaine aldehyde and betaine aldehyde to glycine betaine at the same rate.</text>
</comment>
<comment type="catalytic activity">
    <reaction evidence="1">
        <text>choline + A = betaine aldehyde + AH2</text>
        <dbReference type="Rhea" id="RHEA:17433"/>
        <dbReference type="ChEBI" id="CHEBI:13193"/>
        <dbReference type="ChEBI" id="CHEBI:15354"/>
        <dbReference type="ChEBI" id="CHEBI:15710"/>
        <dbReference type="ChEBI" id="CHEBI:17499"/>
        <dbReference type="EC" id="1.1.99.1"/>
    </reaction>
</comment>
<comment type="catalytic activity">
    <reaction evidence="1">
        <text>betaine aldehyde + NAD(+) + H2O = glycine betaine + NADH + 2 H(+)</text>
        <dbReference type="Rhea" id="RHEA:15305"/>
        <dbReference type="ChEBI" id="CHEBI:15377"/>
        <dbReference type="ChEBI" id="CHEBI:15378"/>
        <dbReference type="ChEBI" id="CHEBI:15710"/>
        <dbReference type="ChEBI" id="CHEBI:17750"/>
        <dbReference type="ChEBI" id="CHEBI:57540"/>
        <dbReference type="ChEBI" id="CHEBI:57945"/>
        <dbReference type="EC" id="1.2.1.8"/>
    </reaction>
</comment>
<comment type="cofactor">
    <cofactor evidence="1">
        <name>FAD</name>
        <dbReference type="ChEBI" id="CHEBI:57692"/>
    </cofactor>
</comment>
<comment type="pathway">
    <text evidence="1">Amine and polyamine biosynthesis; betaine biosynthesis via choline pathway; betaine aldehyde from choline (cytochrome c reductase route): step 1/1.</text>
</comment>
<comment type="similarity">
    <text evidence="1">Belongs to the GMC oxidoreductase family.</text>
</comment>